<reference key="1">
    <citation type="journal article" date="2007" name="J. Bacteriol.">
        <title>Complete genome sequence of Haemophilus somnus (Histophilus somni) strain 129Pt and comparison to Haemophilus ducreyi 35000HP and Haemophilus influenzae Rd.</title>
        <authorList>
            <person name="Challacombe J.F."/>
            <person name="Duncan A.J."/>
            <person name="Brettin T.S."/>
            <person name="Bruce D."/>
            <person name="Chertkov O."/>
            <person name="Detter J.C."/>
            <person name="Han C.S."/>
            <person name="Misra M."/>
            <person name="Richardson P."/>
            <person name="Tapia R."/>
            <person name="Thayer N."/>
            <person name="Xie G."/>
            <person name="Inzana T.J."/>
        </authorList>
    </citation>
    <scope>NUCLEOTIDE SEQUENCE [LARGE SCALE GENOMIC DNA]</scope>
    <source>
        <strain>129Pt</strain>
    </source>
</reference>
<protein>
    <recommendedName>
        <fullName evidence="1">Methionine import ATP-binding protein MetN</fullName>
        <ecNumber evidence="1">7.4.2.11</ecNumber>
    </recommendedName>
</protein>
<keyword id="KW-0029">Amino-acid transport</keyword>
<keyword id="KW-0067">ATP-binding</keyword>
<keyword id="KW-0997">Cell inner membrane</keyword>
<keyword id="KW-1003">Cell membrane</keyword>
<keyword id="KW-0472">Membrane</keyword>
<keyword id="KW-0547">Nucleotide-binding</keyword>
<keyword id="KW-1278">Translocase</keyword>
<keyword id="KW-0813">Transport</keyword>
<feature type="chain" id="PRO_0000270308" description="Methionine import ATP-binding protein MetN">
    <location>
        <begin position="1"/>
        <end position="345"/>
    </location>
</feature>
<feature type="domain" description="ABC transporter" evidence="1">
    <location>
        <begin position="2"/>
        <end position="241"/>
    </location>
</feature>
<feature type="binding site" evidence="1">
    <location>
        <begin position="38"/>
        <end position="45"/>
    </location>
    <ligand>
        <name>ATP</name>
        <dbReference type="ChEBI" id="CHEBI:30616"/>
    </ligand>
</feature>
<name>METN_HISS1</name>
<dbReference type="EC" id="7.4.2.11" evidence="1"/>
<dbReference type="EMBL" id="CP000436">
    <property type="protein sequence ID" value="ABI25801.1"/>
    <property type="molecule type" value="Genomic_DNA"/>
</dbReference>
<dbReference type="SMR" id="Q0I5E9"/>
<dbReference type="KEGG" id="hso:HS_1533"/>
<dbReference type="eggNOG" id="COG1135">
    <property type="taxonomic scope" value="Bacteria"/>
</dbReference>
<dbReference type="HOGENOM" id="CLU_000604_1_3_6"/>
<dbReference type="GO" id="GO:0009276">
    <property type="term" value="C:Gram-negative-bacterium-type cell wall"/>
    <property type="evidence" value="ECO:0007669"/>
    <property type="project" value="InterPro"/>
</dbReference>
<dbReference type="GO" id="GO:0005886">
    <property type="term" value="C:plasma membrane"/>
    <property type="evidence" value="ECO:0007669"/>
    <property type="project" value="UniProtKB-SubCell"/>
</dbReference>
<dbReference type="GO" id="GO:0033232">
    <property type="term" value="F:ABC-type D-methionine transporter activity"/>
    <property type="evidence" value="ECO:0007669"/>
    <property type="project" value="UniProtKB-EC"/>
</dbReference>
<dbReference type="GO" id="GO:0005524">
    <property type="term" value="F:ATP binding"/>
    <property type="evidence" value="ECO:0007669"/>
    <property type="project" value="UniProtKB-KW"/>
</dbReference>
<dbReference type="GO" id="GO:0016887">
    <property type="term" value="F:ATP hydrolysis activity"/>
    <property type="evidence" value="ECO:0007669"/>
    <property type="project" value="InterPro"/>
</dbReference>
<dbReference type="CDD" id="cd03258">
    <property type="entry name" value="ABC_MetN_methionine_transporter"/>
    <property type="match status" value="1"/>
</dbReference>
<dbReference type="FunFam" id="3.40.50.300:FF:000233">
    <property type="entry name" value="Methionine import ATP-binding protein MetN"/>
    <property type="match status" value="1"/>
</dbReference>
<dbReference type="Gene3D" id="3.30.70.260">
    <property type="match status" value="1"/>
</dbReference>
<dbReference type="Gene3D" id="3.40.50.300">
    <property type="entry name" value="P-loop containing nucleotide triphosphate hydrolases"/>
    <property type="match status" value="1"/>
</dbReference>
<dbReference type="InterPro" id="IPR003593">
    <property type="entry name" value="AAA+_ATPase"/>
</dbReference>
<dbReference type="InterPro" id="IPR012692">
    <property type="entry name" value="ABC_MetN_proteobac"/>
</dbReference>
<dbReference type="InterPro" id="IPR003439">
    <property type="entry name" value="ABC_transporter-like_ATP-bd"/>
</dbReference>
<dbReference type="InterPro" id="IPR017871">
    <property type="entry name" value="ABC_transporter-like_CS"/>
</dbReference>
<dbReference type="InterPro" id="IPR045865">
    <property type="entry name" value="ACT-like_dom_sf"/>
</dbReference>
<dbReference type="InterPro" id="IPR041701">
    <property type="entry name" value="MetN_ABC"/>
</dbReference>
<dbReference type="InterPro" id="IPR050086">
    <property type="entry name" value="MetN_ABC_transporter-like"/>
</dbReference>
<dbReference type="InterPro" id="IPR018449">
    <property type="entry name" value="NIL_domain"/>
</dbReference>
<dbReference type="InterPro" id="IPR027417">
    <property type="entry name" value="P-loop_NTPase"/>
</dbReference>
<dbReference type="NCBIfam" id="TIGR02314">
    <property type="entry name" value="ABC_MetN"/>
    <property type="match status" value="1"/>
</dbReference>
<dbReference type="PANTHER" id="PTHR43166">
    <property type="entry name" value="AMINO ACID IMPORT ATP-BINDING PROTEIN"/>
    <property type="match status" value="1"/>
</dbReference>
<dbReference type="PANTHER" id="PTHR43166:SF30">
    <property type="entry name" value="METHIONINE IMPORT ATP-BINDING PROTEIN METN"/>
    <property type="match status" value="1"/>
</dbReference>
<dbReference type="Pfam" id="PF00005">
    <property type="entry name" value="ABC_tran"/>
    <property type="match status" value="1"/>
</dbReference>
<dbReference type="Pfam" id="PF09383">
    <property type="entry name" value="NIL"/>
    <property type="match status" value="1"/>
</dbReference>
<dbReference type="SMART" id="SM00382">
    <property type="entry name" value="AAA"/>
    <property type="match status" value="1"/>
</dbReference>
<dbReference type="SMART" id="SM00930">
    <property type="entry name" value="NIL"/>
    <property type="match status" value="1"/>
</dbReference>
<dbReference type="SUPFAM" id="SSF55021">
    <property type="entry name" value="ACT-like"/>
    <property type="match status" value="1"/>
</dbReference>
<dbReference type="SUPFAM" id="SSF52540">
    <property type="entry name" value="P-loop containing nucleoside triphosphate hydrolases"/>
    <property type="match status" value="1"/>
</dbReference>
<dbReference type="PROSITE" id="PS00211">
    <property type="entry name" value="ABC_TRANSPORTER_1"/>
    <property type="match status" value="1"/>
</dbReference>
<dbReference type="PROSITE" id="PS50893">
    <property type="entry name" value="ABC_TRANSPORTER_2"/>
    <property type="match status" value="1"/>
</dbReference>
<dbReference type="PROSITE" id="PS51264">
    <property type="entry name" value="METN"/>
    <property type="match status" value="1"/>
</dbReference>
<accession>Q0I5E9</accession>
<organism>
    <name type="scientific">Histophilus somni (strain 129Pt)</name>
    <name type="common">Haemophilus somnus</name>
    <dbReference type="NCBI Taxonomy" id="205914"/>
    <lineage>
        <taxon>Bacteria</taxon>
        <taxon>Pseudomonadati</taxon>
        <taxon>Pseudomonadota</taxon>
        <taxon>Gammaproteobacteria</taxon>
        <taxon>Pasteurellales</taxon>
        <taxon>Pasteurellaceae</taxon>
        <taxon>Histophilus</taxon>
    </lineage>
</organism>
<evidence type="ECO:0000255" key="1">
    <source>
        <dbReference type="HAMAP-Rule" id="MF_01719"/>
    </source>
</evidence>
<comment type="function">
    <text evidence="1">Part of the ABC transporter complex MetNIQ involved in methionine import. Responsible for energy coupling to the transport system.</text>
</comment>
<comment type="catalytic activity">
    <reaction evidence="1">
        <text>L-methionine(out) + ATP + H2O = L-methionine(in) + ADP + phosphate + H(+)</text>
        <dbReference type="Rhea" id="RHEA:29779"/>
        <dbReference type="ChEBI" id="CHEBI:15377"/>
        <dbReference type="ChEBI" id="CHEBI:15378"/>
        <dbReference type="ChEBI" id="CHEBI:30616"/>
        <dbReference type="ChEBI" id="CHEBI:43474"/>
        <dbReference type="ChEBI" id="CHEBI:57844"/>
        <dbReference type="ChEBI" id="CHEBI:456216"/>
        <dbReference type="EC" id="7.4.2.11"/>
    </reaction>
</comment>
<comment type="catalytic activity">
    <reaction evidence="1">
        <text>D-methionine(out) + ATP + H2O = D-methionine(in) + ADP + phosphate + H(+)</text>
        <dbReference type="Rhea" id="RHEA:29767"/>
        <dbReference type="ChEBI" id="CHEBI:15377"/>
        <dbReference type="ChEBI" id="CHEBI:15378"/>
        <dbReference type="ChEBI" id="CHEBI:30616"/>
        <dbReference type="ChEBI" id="CHEBI:43474"/>
        <dbReference type="ChEBI" id="CHEBI:57932"/>
        <dbReference type="ChEBI" id="CHEBI:456216"/>
        <dbReference type="EC" id="7.4.2.11"/>
    </reaction>
</comment>
<comment type="subunit">
    <text evidence="1">The complex is composed of two ATP-binding proteins (MetN), two transmembrane proteins (MetI) and a solute-binding protein (MetQ).</text>
</comment>
<comment type="subcellular location">
    <subcellularLocation>
        <location evidence="1">Cell inner membrane</location>
        <topology evidence="1">Peripheral membrane protein</topology>
    </subcellularLocation>
</comment>
<comment type="similarity">
    <text evidence="1">Belongs to the ABC transporter superfamily. Methionine importer (TC 3.A.1.24) family.</text>
</comment>
<gene>
    <name evidence="1" type="primary">metN</name>
    <name type="ordered locus">HS_1533</name>
</gene>
<proteinExistence type="inferred from homology"/>
<sequence length="345" mass="37860">MIKLKNISKVFNVSGKNLTALDNVSLEVPQGQICGVIGASGAGKSTLIRCINLLERPTSGSVIVDNTDLTQLSDNELIHARRHIGMIFQHFNLLSSRTVFDNVALPLELEKTDKTQIKQKVDALLNLVGLYDKKDVYPANLSGGQKQRVAIARALANSPKVLLCDEATSALDPATTQSILKLLKEINRTLGITILLITHEMDVVKRICDQVAVINKGQLIEQGSVGDIFSNPKTLLAQEFIHSTFHINLPEEYMENLSATPKHAKSYPIIKFEFTGRSVDAPLLSQASKQFGVDLSILSSQIDYAGEVKFGFVIAEVEGEEEAITQTKIYLMENNVRVEVLGYVG</sequence>